<organism>
    <name type="scientific">Bradyrhizobium sp. (strain ORS 278)</name>
    <dbReference type="NCBI Taxonomy" id="114615"/>
    <lineage>
        <taxon>Bacteria</taxon>
        <taxon>Pseudomonadati</taxon>
        <taxon>Pseudomonadota</taxon>
        <taxon>Alphaproteobacteria</taxon>
        <taxon>Hyphomicrobiales</taxon>
        <taxon>Nitrobacteraceae</taxon>
        <taxon>Bradyrhizobium</taxon>
    </lineage>
</organism>
<sequence>MTQHPPGDDRTNRIVAVTLDEESIGRSGPDIEHERAIAIYDLVEENLFAPEGADGAGPFTLHLGITANRLMFDIRKEDGTPVVTHLLSLSPFRRIVKDYFMICDSYYNAIRTATPDKIEAIDMGRRGIHDEGSRTLQERLKGKVRVDFETSRRLFTLITVLHWKGEGQ</sequence>
<gene>
    <name type="ordered locus">BRADO6636</name>
</gene>
<accession>A4Z264</accession>
<reference key="1">
    <citation type="journal article" date="2007" name="Science">
        <title>Legumes symbioses: absence of nod genes in photosynthetic bradyrhizobia.</title>
        <authorList>
            <person name="Giraud E."/>
            <person name="Moulin L."/>
            <person name="Vallenet D."/>
            <person name="Barbe V."/>
            <person name="Cytryn E."/>
            <person name="Avarre J.-C."/>
            <person name="Jaubert M."/>
            <person name="Simon D."/>
            <person name="Cartieaux F."/>
            <person name="Prin Y."/>
            <person name="Bena G."/>
            <person name="Hannibal L."/>
            <person name="Fardoux J."/>
            <person name="Kojadinovic M."/>
            <person name="Vuillet L."/>
            <person name="Lajus A."/>
            <person name="Cruveiller S."/>
            <person name="Rouy Z."/>
            <person name="Mangenot S."/>
            <person name="Segurens B."/>
            <person name="Dossat C."/>
            <person name="Franck W.L."/>
            <person name="Chang W.-S."/>
            <person name="Saunders E."/>
            <person name="Bruce D."/>
            <person name="Richardson P."/>
            <person name="Normand P."/>
            <person name="Dreyfus B."/>
            <person name="Pignol D."/>
            <person name="Stacey G."/>
            <person name="Emerich D."/>
            <person name="Vermeglio A."/>
            <person name="Medigue C."/>
            <person name="Sadowsky M."/>
        </authorList>
    </citation>
    <scope>NUCLEOTIDE SEQUENCE [LARGE SCALE GENOMIC DNA]</scope>
    <source>
        <strain>ORS 278</strain>
    </source>
</reference>
<proteinExistence type="inferred from homology"/>
<keyword id="KW-1185">Reference proteome</keyword>
<comment type="similarity">
    <text evidence="1">Belongs to the UPF0262 family.</text>
</comment>
<evidence type="ECO:0000255" key="1">
    <source>
        <dbReference type="HAMAP-Rule" id="MF_00678"/>
    </source>
</evidence>
<protein>
    <recommendedName>
        <fullName evidence="1">UPF0262 protein BRADO6636</fullName>
    </recommendedName>
</protein>
<name>Y6636_BRASO</name>
<feature type="chain" id="PRO_0000314190" description="UPF0262 protein BRADO6636">
    <location>
        <begin position="1"/>
        <end position="168"/>
    </location>
</feature>
<dbReference type="EMBL" id="CU234118">
    <property type="protein sequence ID" value="CAL80240.1"/>
    <property type="molecule type" value="Genomic_DNA"/>
</dbReference>
<dbReference type="RefSeq" id="WP_012030109.1">
    <property type="nucleotide sequence ID" value="NC_009445.1"/>
</dbReference>
<dbReference type="STRING" id="114615.BRADO6636"/>
<dbReference type="KEGG" id="bra:BRADO6636"/>
<dbReference type="eggNOG" id="COG5328">
    <property type="taxonomic scope" value="Bacteria"/>
</dbReference>
<dbReference type="HOGENOM" id="CLU_112904_0_0_5"/>
<dbReference type="OrthoDB" id="9798434at2"/>
<dbReference type="Proteomes" id="UP000001994">
    <property type="component" value="Chromosome"/>
</dbReference>
<dbReference type="HAMAP" id="MF_00678">
    <property type="entry name" value="UPF0262"/>
    <property type="match status" value="1"/>
</dbReference>
<dbReference type="InterPro" id="IPR008321">
    <property type="entry name" value="UCP032146"/>
</dbReference>
<dbReference type="NCBIfam" id="NF002769">
    <property type="entry name" value="PRK02853.1"/>
    <property type="match status" value="1"/>
</dbReference>
<dbReference type="Pfam" id="PF06793">
    <property type="entry name" value="UPF0262"/>
    <property type="match status" value="1"/>
</dbReference>
<dbReference type="PIRSF" id="PIRSF032146">
    <property type="entry name" value="UCP032146"/>
    <property type="match status" value="1"/>
</dbReference>